<protein>
    <recommendedName>
        <fullName evidence="1">Small ribosomal subunit protein uS2</fullName>
    </recommendedName>
    <alternativeName>
        <fullName evidence="2">30S ribosomal protein S2</fullName>
    </alternativeName>
</protein>
<dbReference type="EMBL" id="AM286690">
    <property type="protein sequence ID" value="CAL16591.1"/>
    <property type="molecule type" value="Genomic_DNA"/>
</dbReference>
<dbReference type="RefSeq" id="WP_011588426.1">
    <property type="nucleotide sequence ID" value="NC_008260.1"/>
</dbReference>
<dbReference type="SMR" id="Q0VQF7"/>
<dbReference type="STRING" id="393595.ABO_1143"/>
<dbReference type="KEGG" id="abo:ABO_1143"/>
<dbReference type="eggNOG" id="COG0052">
    <property type="taxonomic scope" value="Bacteria"/>
</dbReference>
<dbReference type="HOGENOM" id="CLU_040318_1_2_6"/>
<dbReference type="OrthoDB" id="9808036at2"/>
<dbReference type="Proteomes" id="UP000008871">
    <property type="component" value="Chromosome"/>
</dbReference>
<dbReference type="GO" id="GO:0022627">
    <property type="term" value="C:cytosolic small ribosomal subunit"/>
    <property type="evidence" value="ECO:0007669"/>
    <property type="project" value="TreeGrafter"/>
</dbReference>
<dbReference type="GO" id="GO:0003735">
    <property type="term" value="F:structural constituent of ribosome"/>
    <property type="evidence" value="ECO:0007669"/>
    <property type="project" value="InterPro"/>
</dbReference>
<dbReference type="GO" id="GO:0006412">
    <property type="term" value="P:translation"/>
    <property type="evidence" value="ECO:0007669"/>
    <property type="project" value="UniProtKB-UniRule"/>
</dbReference>
<dbReference type="CDD" id="cd01425">
    <property type="entry name" value="RPS2"/>
    <property type="match status" value="1"/>
</dbReference>
<dbReference type="FunFam" id="1.10.287.610:FF:000001">
    <property type="entry name" value="30S ribosomal protein S2"/>
    <property type="match status" value="1"/>
</dbReference>
<dbReference type="Gene3D" id="3.40.50.10490">
    <property type="entry name" value="Glucose-6-phosphate isomerase like protein, domain 1"/>
    <property type="match status" value="1"/>
</dbReference>
<dbReference type="Gene3D" id="1.10.287.610">
    <property type="entry name" value="Helix hairpin bin"/>
    <property type="match status" value="1"/>
</dbReference>
<dbReference type="HAMAP" id="MF_00291_B">
    <property type="entry name" value="Ribosomal_uS2_B"/>
    <property type="match status" value="1"/>
</dbReference>
<dbReference type="InterPro" id="IPR001865">
    <property type="entry name" value="Ribosomal_uS2"/>
</dbReference>
<dbReference type="InterPro" id="IPR005706">
    <property type="entry name" value="Ribosomal_uS2_bac/mit/plastid"/>
</dbReference>
<dbReference type="InterPro" id="IPR018130">
    <property type="entry name" value="Ribosomal_uS2_CS"/>
</dbReference>
<dbReference type="InterPro" id="IPR023591">
    <property type="entry name" value="Ribosomal_uS2_flav_dom_sf"/>
</dbReference>
<dbReference type="NCBIfam" id="TIGR01011">
    <property type="entry name" value="rpsB_bact"/>
    <property type="match status" value="1"/>
</dbReference>
<dbReference type="PANTHER" id="PTHR12534">
    <property type="entry name" value="30S RIBOSOMAL PROTEIN S2 PROKARYOTIC AND ORGANELLAR"/>
    <property type="match status" value="1"/>
</dbReference>
<dbReference type="PANTHER" id="PTHR12534:SF0">
    <property type="entry name" value="SMALL RIBOSOMAL SUBUNIT PROTEIN US2M"/>
    <property type="match status" value="1"/>
</dbReference>
<dbReference type="Pfam" id="PF00318">
    <property type="entry name" value="Ribosomal_S2"/>
    <property type="match status" value="1"/>
</dbReference>
<dbReference type="PRINTS" id="PR00395">
    <property type="entry name" value="RIBOSOMALS2"/>
</dbReference>
<dbReference type="SUPFAM" id="SSF52313">
    <property type="entry name" value="Ribosomal protein S2"/>
    <property type="match status" value="1"/>
</dbReference>
<dbReference type="PROSITE" id="PS00962">
    <property type="entry name" value="RIBOSOMAL_S2_1"/>
    <property type="match status" value="1"/>
</dbReference>
<dbReference type="PROSITE" id="PS00963">
    <property type="entry name" value="RIBOSOMAL_S2_2"/>
    <property type="match status" value="1"/>
</dbReference>
<reference key="1">
    <citation type="journal article" date="2006" name="Nat. Biotechnol.">
        <title>Genome sequence of the ubiquitous hydrocarbon-degrading marine bacterium Alcanivorax borkumensis.</title>
        <authorList>
            <person name="Schneiker S."/>
            <person name="Martins dos Santos V.A.P."/>
            <person name="Bartels D."/>
            <person name="Bekel T."/>
            <person name="Brecht M."/>
            <person name="Buhrmester J."/>
            <person name="Chernikova T.N."/>
            <person name="Denaro R."/>
            <person name="Ferrer M."/>
            <person name="Gertler C."/>
            <person name="Goesmann A."/>
            <person name="Golyshina O.V."/>
            <person name="Kaminski F."/>
            <person name="Khachane A.N."/>
            <person name="Lang S."/>
            <person name="Linke B."/>
            <person name="McHardy A.C."/>
            <person name="Meyer F."/>
            <person name="Nechitaylo T."/>
            <person name="Puehler A."/>
            <person name="Regenhardt D."/>
            <person name="Rupp O."/>
            <person name="Sabirova J.S."/>
            <person name="Selbitschka W."/>
            <person name="Yakimov M.M."/>
            <person name="Timmis K.N."/>
            <person name="Vorhoelter F.-J."/>
            <person name="Weidner S."/>
            <person name="Kaiser O."/>
            <person name="Golyshin P.N."/>
        </authorList>
    </citation>
    <scope>NUCLEOTIDE SEQUENCE [LARGE SCALE GENOMIC DNA]</scope>
    <source>
        <strain>ATCC 700651 / DSM 11573 / NCIMB 13689 / SK2</strain>
    </source>
</reference>
<accession>Q0VQF7</accession>
<keyword id="KW-1185">Reference proteome</keyword>
<keyword id="KW-0687">Ribonucleoprotein</keyword>
<keyword id="KW-0689">Ribosomal protein</keyword>
<comment type="similarity">
    <text evidence="1">Belongs to the universal ribosomal protein uS2 family.</text>
</comment>
<gene>
    <name evidence="1" type="primary">rpsB</name>
    <name type="ordered locus">ABO_1143</name>
</gene>
<evidence type="ECO:0000255" key="1">
    <source>
        <dbReference type="HAMAP-Rule" id="MF_00291"/>
    </source>
</evidence>
<evidence type="ECO:0000305" key="2"/>
<sequence>MSSVTMRDMLKAGVHFGHQTRYWNPKMNTYIFGARNKIHIINLEQTLPLFNDAMAFLNKLAASNNKILFVGTKRAAQKAVSEEAQRCGMPYVDHRWLGGMLTNWKTIRQSIKRYRELEAQFQDGTFDKLTKKEALMRKREMDKLERSIGGIKDMGGLPDALFVIDVDHEDIALQEARKLGIPVVAVVDTNSNPDGVDYVIPGNDDAIRAIQLYVKAAADVILEGKQYAQNQTGGESEFVEVADEAAGEKAEG</sequence>
<organism>
    <name type="scientific">Alcanivorax borkumensis (strain ATCC 700651 / DSM 11573 / NCIMB 13689 / SK2)</name>
    <dbReference type="NCBI Taxonomy" id="393595"/>
    <lineage>
        <taxon>Bacteria</taxon>
        <taxon>Pseudomonadati</taxon>
        <taxon>Pseudomonadota</taxon>
        <taxon>Gammaproteobacteria</taxon>
        <taxon>Oceanospirillales</taxon>
        <taxon>Alcanivoracaceae</taxon>
        <taxon>Alcanivorax</taxon>
    </lineage>
</organism>
<proteinExistence type="inferred from homology"/>
<name>RS2_ALCBS</name>
<feature type="chain" id="PRO_1000003883" description="Small ribosomal subunit protein uS2">
    <location>
        <begin position="1"/>
        <end position="252"/>
    </location>
</feature>